<evidence type="ECO:0000250" key="1"/>
<evidence type="ECO:0000305" key="2"/>
<name>TPIS_DEBHA</name>
<organism>
    <name type="scientific">Debaryomyces hansenii (strain ATCC 36239 / CBS 767 / BCRC 21394 / JCM 1990 / NBRC 0083 / IGC 2968)</name>
    <name type="common">Yeast</name>
    <name type="synonym">Torulaspora hansenii</name>
    <dbReference type="NCBI Taxonomy" id="284592"/>
    <lineage>
        <taxon>Eukaryota</taxon>
        <taxon>Fungi</taxon>
        <taxon>Dikarya</taxon>
        <taxon>Ascomycota</taxon>
        <taxon>Saccharomycotina</taxon>
        <taxon>Pichiomycetes</taxon>
        <taxon>Debaryomycetaceae</taxon>
        <taxon>Debaryomyces</taxon>
    </lineage>
</organism>
<feature type="chain" id="PRO_0000090161" description="Triosephosphate isomerase">
    <location>
        <begin position="1"/>
        <end position="248"/>
    </location>
</feature>
<feature type="active site" description="Electrophile" evidence="1">
    <location>
        <position position="95"/>
    </location>
</feature>
<feature type="active site" description="Proton acceptor" evidence="1">
    <location>
        <position position="165"/>
    </location>
</feature>
<feature type="binding site" evidence="1">
    <location>
        <position position="10"/>
    </location>
    <ligand>
        <name>substrate</name>
    </ligand>
</feature>
<feature type="binding site" evidence="1">
    <location>
        <position position="12"/>
    </location>
    <ligand>
        <name>substrate</name>
    </ligand>
</feature>
<keyword id="KW-0312">Gluconeogenesis</keyword>
<keyword id="KW-0324">Glycolysis</keyword>
<keyword id="KW-0413">Isomerase</keyword>
<keyword id="KW-1185">Reference proteome</keyword>
<protein>
    <recommendedName>
        <fullName>Triosephosphate isomerase</fullName>
        <shortName>TIM</shortName>
        <ecNumber>5.3.1.1</ecNumber>
    </recommendedName>
    <alternativeName>
        <fullName>Triose-phosphate isomerase</fullName>
    </alternativeName>
</protein>
<dbReference type="EC" id="5.3.1.1"/>
<dbReference type="EMBL" id="CR382138">
    <property type="protein sequence ID" value="CAG88985.1"/>
    <property type="molecule type" value="Genomic_DNA"/>
</dbReference>
<dbReference type="RefSeq" id="XP_460653.1">
    <property type="nucleotide sequence ID" value="XM_460653.1"/>
</dbReference>
<dbReference type="SMR" id="Q6BMB8"/>
<dbReference type="FunCoup" id="Q6BMB8">
    <property type="interactions" value="736"/>
</dbReference>
<dbReference type="STRING" id="284592.Q6BMB8"/>
<dbReference type="GeneID" id="2904121"/>
<dbReference type="KEGG" id="dha:DEHA2F06754g"/>
<dbReference type="VEuPathDB" id="FungiDB:DEHA2F06754g"/>
<dbReference type="eggNOG" id="KOG1643">
    <property type="taxonomic scope" value="Eukaryota"/>
</dbReference>
<dbReference type="HOGENOM" id="CLU_024251_2_0_1"/>
<dbReference type="InParanoid" id="Q6BMB8"/>
<dbReference type="OMA" id="NWKMHMT"/>
<dbReference type="OrthoDB" id="6715177at2759"/>
<dbReference type="UniPathway" id="UPA00109">
    <property type="reaction ID" value="UER00189"/>
</dbReference>
<dbReference type="UniPathway" id="UPA00138"/>
<dbReference type="Proteomes" id="UP000000599">
    <property type="component" value="Chromosome F"/>
</dbReference>
<dbReference type="GO" id="GO:0005829">
    <property type="term" value="C:cytosol"/>
    <property type="evidence" value="ECO:0007669"/>
    <property type="project" value="TreeGrafter"/>
</dbReference>
<dbReference type="GO" id="GO:0004807">
    <property type="term" value="F:triose-phosphate isomerase activity"/>
    <property type="evidence" value="ECO:0007669"/>
    <property type="project" value="UniProtKB-EC"/>
</dbReference>
<dbReference type="GO" id="GO:0061621">
    <property type="term" value="P:canonical glycolysis"/>
    <property type="evidence" value="ECO:0007669"/>
    <property type="project" value="EnsemblFungi"/>
</dbReference>
<dbReference type="GO" id="GO:0006094">
    <property type="term" value="P:gluconeogenesis"/>
    <property type="evidence" value="ECO:0007669"/>
    <property type="project" value="UniProtKB-UniPathway"/>
</dbReference>
<dbReference type="GO" id="GO:0046166">
    <property type="term" value="P:glyceraldehyde-3-phosphate biosynthetic process"/>
    <property type="evidence" value="ECO:0007669"/>
    <property type="project" value="TreeGrafter"/>
</dbReference>
<dbReference type="GO" id="GO:0019563">
    <property type="term" value="P:glycerol catabolic process"/>
    <property type="evidence" value="ECO:0007669"/>
    <property type="project" value="TreeGrafter"/>
</dbReference>
<dbReference type="CDD" id="cd00311">
    <property type="entry name" value="TIM"/>
    <property type="match status" value="1"/>
</dbReference>
<dbReference type="FunFam" id="3.20.20.70:FF:000025">
    <property type="entry name" value="Triosephosphate isomerase"/>
    <property type="match status" value="1"/>
</dbReference>
<dbReference type="Gene3D" id="3.20.20.70">
    <property type="entry name" value="Aldolase class I"/>
    <property type="match status" value="1"/>
</dbReference>
<dbReference type="HAMAP" id="MF_00147_B">
    <property type="entry name" value="TIM_B"/>
    <property type="match status" value="1"/>
</dbReference>
<dbReference type="InterPro" id="IPR013785">
    <property type="entry name" value="Aldolase_TIM"/>
</dbReference>
<dbReference type="InterPro" id="IPR035990">
    <property type="entry name" value="TIM_sf"/>
</dbReference>
<dbReference type="InterPro" id="IPR022896">
    <property type="entry name" value="TrioseP_Isoase_bac/euk"/>
</dbReference>
<dbReference type="InterPro" id="IPR000652">
    <property type="entry name" value="Triosephosphate_isomerase"/>
</dbReference>
<dbReference type="InterPro" id="IPR020861">
    <property type="entry name" value="Triosephosphate_isomerase_AS"/>
</dbReference>
<dbReference type="NCBIfam" id="TIGR00419">
    <property type="entry name" value="tim"/>
    <property type="match status" value="1"/>
</dbReference>
<dbReference type="PANTHER" id="PTHR21139">
    <property type="entry name" value="TRIOSEPHOSPHATE ISOMERASE"/>
    <property type="match status" value="1"/>
</dbReference>
<dbReference type="PANTHER" id="PTHR21139:SF41">
    <property type="entry name" value="TRIOSEPHOSPHATE ISOMERASE"/>
    <property type="match status" value="1"/>
</dbReference>
<dbReference type="Pfam" id="PF00121">
    <property type="entry name" value="TIM"/>
    <property type="match status" value="1"/>
</dbReference>
<dbReference type="SUPFAM" id="SSF51351">
    <property type="entry name" value="Triosephosphate isomerase (TIM)"/>
    <property type="match status" value="1"/>
</dbReference>
<dbReference type="PROSITE" id="PS00171">
    <property type="entry name" value="TIM_1"/>
    <property type="match status" value="1"/>
</dbReference>
<dbReference type="PROSITE" id="PS51440">
    <property type="entry name" value="TIM_2"/>
    <property type="match status" value="1"/>
</dbReference>
<gene>
    <name type="primary">TPI1</name>
    <name type="ordered locus">DEHA2F06754g</name>
</gene>
<reference key="1">
    <citation type="journal article" date="2004" name="Nature">
        <title>Genome evolution in yeasts.</title>
        <authorList>
            <person name="Dujon B."/>
            <person name="Sherman D."/>
            <person name="Fischer G."/>
            <person name="Durrens P."/>
            <person name="Casaregola S."/>
            <person name="Lafontaine I."/>
            <person name="de Montigny J."/>
            <person name="Marck C."/>
            <person name="Neuveglise C."/>
            <person name="Talla E."/>
            <person name="Goffard N."/>
            <person name="Frangeul L."/>
            <person name="Aigle M."/>
            <person name="Anthouard V."/>
            <person name="Babour A."/>
            <person name="Barbe V."/>
            <person name="Barnay S."/>
            <person name="Blanchin S."/>
            <person name="Beckerich J.-M."/>
            <person name="Beyne E."/>
            <person name="Bleykasten C."/>
            <person name="Boisrame A."/>
            <person name="Boyer J."/>
            <person name="Cattolico L."/>
            <person name="Confanioleri F."/>
            <person name="de Daruvar A."/>
            <person name="Despons L."/>
            <person name="Fabre E."/>
            <person name="Fairhead C."/>
            <person name="Ferry-Dumazet H."/>
            <person name="Groppi A."/>
            <person name="Hantraye F."/>
            <person name="Hennequin C."/>
            <person name="Jauniaux N."/>
            <person name="Joyet P."/>
            <person name="Kachouri R."/>
            <person name="Kerrest A."/>
            <person name="Koszul R."/>
            <person name="Lemaire M."/>
            <person name="Lesur I."/>
            <person name="Ma L."/>
            <person name="Muller H."/>
            <person name="Nicaud J.-M."/>
            <person name="Nikolski M."/>
            <person name="Oztas S."/>
            <person name="Ozier-Kalogeropoulos O."/>
            <person name="Pellenz S."/>
            <person name="Potier S."/>
            <person name="Richard G.-F."/>
            <person name="Straub M.-L."/>
            <person name="Suleau A."/>
            <person name="Swennen D."/>
            <person name="Tekaia F."/>
            <person name="Wesolowski-Louvel M."/>
            <person name="Westhof E."/>
            <person name="Wirth B."/>
            <person name="Zeniou-Meyer M."/>
            <person name="Zivanovic Y."/>
            <person name="Bolotin-Fukuhara M."/>
            <person name="Thierry A."/>
            <person name="Bouchier C."/>
            <person name="Caudron B."/>
            <person name="Scarpelli C."/>
            <person name="Gaillardin C."/>
            <person name="Weissenbach J."/>
            <person name="Wincker P."/>
            <person name="Souciet J.-L."/>
        </authorList>
    </citation>
    <scope>NUCLEOTIDE SEQUENCE [LARGE SCALE GENOMIC DNA]</scope>
    <source>
        <strain>ATCC 36239 / CBS 767 / BCRC 21394 / JCM 1990 / NBRC 0083 / IGC 2968</strain>
    </source>
</reference>
<sequence>MARQFFVGGNFKMNGTRESVSKIVDGLNKAELPSNVEVVIAPPAPYIALAVNENKQKTIEVSAQNCFDKASGAYTGEISPEQIKDLGATWTLTGHSERRTIIKESDDFIASKTKFALDQGLSVILCIGETLEERKANVTLDVCARQLDAVARVVSDWSKIVVAYEPVWAIGTGLAATPEDAQETHKAIREHLSKSIGADAAEKTRILYGGSVNGKNAPEFKDKADVDGFLVGGASLKPEFVDIIKSRL</sequence>
<accession>Q6BMB8</accession>
<proteinExistence type="inferred from homology"/>
<comment type="catalytic activity">
    <reaction>
        <text>D-glyceraldehyde 3-phosphate = dihydroxyacetone phosphate</text>
        <dbReference type="Rhea" id="RHEA:18585"/>
        <dbReference type="ChEBI" id="CHEBI:57642"/>
        <dbReference type="ChEBI" id="CHEBI:59776"/>
        <dbReference type="EC" id="5.3.1.1"/>
    </reaction>
</comment>
<comment type="pathway">
    <text>Carbohydrate biosynthesis; gluconeogenesis.</text>
</comment>
<comment type="pathway">
    <text>Carbohydrate degradation; glycolysis; D-glyceraldehyde 3-phosphate from glycerone phosphate: step 1/1.</text>
</comment>
<comment type="subunit">
    <text evidence="1">Homodimer.</text>
</comment>
<comment type="similarity">
    <text evidence="2">Belongs to the triosephosphate isomerase family.</text>
</comment>